<accession>Q6KIE6</accession>
<evidence type="ECO:0000255" key="1">
    <source>
        <dbReference type="HAMAP-Rule" id="MF_01571"/>
    </source>
</evidence>
<protein>
    <recommendedName>
        <fullName evidence="1">Proline--tRNA ligase</fullName>
        <ecNumber evidence="1">6.1.1.15</ecNumber>
    </recommendedName>
    <alternativeName>
        <fullName evidence="1">Prolyl-tRNA synthetase</fullName>
        <shortName evidence="1">ProRS</shortName>
    </alternativeName>
</protein>
<dbReference type="EC" id="6.1.1.15" evidence="1"/>
<dbReference type="EMBL" id="AE017308">
    <property type="protein sequence ID" value="AAT27630.1"/>
    <property type="molecule type" value="Genomic_DNA"/>
</dbReference>
<dbReference type="RefSeq" id="WP_011264664.1">
    <property type="nucleotide sequence ID" value="NC_006908.1"/>
</dbReference>
<dbReference type="SMR" id="Q6KIE6"/>
<dbReference type="STRING" id="267748.MMOB1440"/>
<dbReference type="KEGG" id="mmo:MMOB1440"/>
<dbReference type="eggNOG" id="COG0441">
    <property type="taxonomic scope" value="Bacteria"/>
</dbReference>
<dbReference type="HOGENOM" id="CLU_001882_4_2_14"/>
<dbReference type="Proteomes" id="UP000009072">
    <property type="component" value="Chromosome"/>
</dbReference>
<dbReference type="GO" id="GO:0017101">
    <property type="term" value="C:aminoacyl-tRNA synthetase multienzyme complex"/>
    <property type="evidence" value="ECO:0007669"/>
    <property type="project" value="TreeGrafter"/>
</dbReference>
<dbReference type="GO" id="GO:0005737">
    <property type="term" value="C:cytoplasm"/>
    <property type="evidence" value="ECO:0007669"/>
    <property type="project" value="UniProtKB-SubCell"/>
</dbReference>
<dbReference type="GO" id="GO:0005524">
    <property type="term" value="F:ATP binding"/>
    <property type="evidence" value="ECO:0007669"/>
    <property type="project" value="UniProtKB-UniRule"/>
</dbReference>
<dbReference type="GO" id="GO:0004827">
    <property type="term" value="F:proline-tRNA ligase activity"/>
    <property type="evidence" value="ECO:0007669"/>
    <property type="project" value="UniProtKB-UniRule"/>
</dbReference>
<dbReference type="GO" id="GO:0006433">
    <property type="term" value="P:prolyl-tRNA aminoacylation"/>
    <property type="evidence" value="ECO:0007669"/>
    <property type="project" value="UniProtKB-UniRule"/>
</dbReference>
<dbReference type="CDD" id="cd00778">
    <property type="entry name" value="ProRS_core_arch_euk"/>
    <property type="match status" value="1"/>
</dbReference>
<dbReference type="FunFam" id="3.30.930.10:FF:000037">
    <property type="entry name" value="Proline--tRNA ligase"/>
    <property type="match status" value="1"/>
</dbReference>
<dbReference type="Gene3D" id="3.40.50.800">
    <property type="entry name" value="Anticodon-binding domain"/>
    <property type="match status" value="1"/>
</dbReference>
<dbReference type="Gene3D" id="3.30.930.10">
    <property type="entry name" value="Bira Bifunctional Protein, Domain 2"/>
    <property type="match status" value="1"/>
</dbReference>
<dbReference type="Gene3D" id="3.30.110.30">
    <property type="entry name" value="C-terminal domain of ProRS"/>
    <property type="match status" value="1"/>
</dbReference>
<dbReference type="HAMAP" id="MF_01571">
    <property type="entry name" value="Pro_tRNA_synth_type3"/>
    <property type="match status" value="1"/>
</dbReference>
<dbReference type="InterPro" id="IPR002314">
    <property type="entry name" value="aa-tRNA-synt_IIb"/>
</dbReference>
<dbReference type="InterPro" id="IPR006195">
    <property type="entry name" value="aa-tRNA-synth_II"/>
</dbReference>
<dbReference type="InterPro" id="IPR045864">
    <property type="entry name" value="aa-tRNA-synth_II/BPL/LPL"/>
</dbReference>
<dbReference type="InterPro" id="IPR004154">
    <property type="entry name" value="Anticodon-bd"/>
</dbReference>
<dbReference type="InterPro" id="IPR036621">
    <property type="entry name" value="Anticodon-bd_dom_sf"/>
</dbReference>
<dbReference type="InterPro" id="IPR002316">
    <property type="entry name" value="Pro-tRNA-ligase_IIa"/>
</dbReference>
<dbReference type="InterPro" id="IPR004499">
    <property type="entry name" value="Pro-tRNA-ligase_IIa_arc-type"/>
</dbReference>
<dbReference type="InterPro" id="IPR016061">
    <property type="entry name" value="Pro-tRNA_ligase_II_C"/>
</dbReference>
<dbReference type="InterPro" id="IPR017449">
    <property type="entry name" value="Pro-tRNA_synth_II"/>
</dbReference>
<dbReference type="InterPro" id="IPR033721">
    <property type="entry name" value="ProRS_core_arch_euk"/>
</dbReference>
<dbReference type="NCBIfam" id="TIGR00408">
    <property type="entry name" value="proS_fam_I"/>
    <property type="match status" value="1"/>
</dbReference>
<dbReference type="PANTHER" id="PTHR43382:SF2">
    <property type="entry name" value="BIFUNCTIONAL GLUTAMATE_PROLINE--TRNA LIGASE"/>
    <property type="match status" value="1"/>
</dbReference>
<dbReference type="PANTHER" id="PTHR43382">
    <property type="entry name" value="PROLYL-TRNA SYNTHETASE"/>
    <property type="match status" value="1"/>
</dbReference>
<dbReference type="Pfam" id="PF03129">
    <property type="entry name" value="HGTP_anticodon"/>
    <property type="match status" value="1"/>
</dbReference>
<dbReference type="Pfam" id="PF09180">
    <property type="entry name" value="ProRS-C_1"/>
    <property type="match status" value="1"/>
</dbReference>
<dbReference type="Pfam" id="PF00587">
    <property type="entry name" value="tRNA-synt_2b"/>
    <property type="match status" value="1"/>
</dbReference>
<dbReference type="PRINTS" id="PR01046">
    <property type="entry name" value="TRNASYNTHPRO"/>
</dbReference>
<dbReference type="SMART" id="SM00946">
    <property type="entry name" value="ProRS-C_1"/>
    <property type="match status" value="1"/>
</dbReference>
<dbReference type="SUPFAM" id="SSF64586">
    <property type="entry name" value="C-terminal domain of ProRS"/>
    <property type="match status" value="1"/>
</dbReference>
<dbReference type="SUPFAM" id="SSF52954">
    <property type="entry name" value="Class II aaRS ABD-related"/>
    <property type="match status" value="1"/>
</dbReference>
<dbReference type="SUPFAM" id="SSF55681">
    <property type="entry name" value="Class II aaRS and biotin synthetases"/>
    <property type="match status" value="1"/>
</dbReference>
<dbReference type="PROSITE" id="PS50862">
    <property type="entry name" value="AA_TRNA_LIGASE_II"/>
    <property type="match status" value="1"/>
</dbReference>
<sequence>MNIKLLDKITPLEQDFAKWYTDVITKGNLATYGVLKGNIVFMPNSYGIWENVQSNFNKIIKELNVKNLYLPTLIPESLINSEKDHVQGFAPELITVEKVGDKVLNEKLFLRPTSEVLFAEYFKTQLNSYNDLPLLLNQWANVFRWEKTTSPFLRNSEFLWQEGHTSHYSEEEAHQFSKKMIQIYANFFEEFLAIPVIIGQKTESEKFAGAHTTYTIEAMMKDGRALQSGTSHYLGQNFAKAFDISFKDKDNSKSFVYQTSWGISTRLIGAIIMVHGDNRGIIMPPKIATNQVDIITVFANKNPEVLQKANDLFKTLKNDFRVRINDSNKSVGFKAAQSEIEGTPIRIEIGPEDLKQNKVILIRRDTQEKIDVKIDELKSEIFSQIEKIHENLLMQAKRLLNEKIVDVEDYESLKKEIAKGNFVRVPFDGDKKEEEIIKKETFATPRCIPLNFIGETKKCIMTNKETKRYVIFAKSY</sequence>
<proteinExistence type="inferred from homology"/>
<gene>
    <name evidence="1" type="primary">proS</name>
    <name type="ordered locus">MMOB1440</name>
</gene>
<comment type="function">
    <text evidence="1">Catalyzes the attachment of proline to tRNA(Pro) in a two-step reaction: proline is first activated by ATP to form Pro-AMP and then transferred to the acceptor end of tRNA(Pro).</text>
</comment>
<comment type="catalytic activity">
    <reaction evidence="1">
        <text>tRNA(Pro) + L-proline + ATP = L-prolyl-tRNA(Pro) + AMP + diphosphate</text>
        <dbReference type="Rhea" id="RHEA:14305"/>
        <dbReference type="Rhea" id="RHEA-COMP:9700"/>
        <dbReference type="Rhea" id="RHEA-COMP:9702"/>
        <dbReference type="ChEBI" id="CHEBI:30616"/>
        <dbReference type="ChEBI" id="CHEBI:33019"/>
        <dbReference type="ChEBI" id="CHEBI:60039"/>
        <dbReference type="ChEBI" id="CHEBI:78442"/>
        <dbReference type="ChEBI" id="CHEBI:78532"/>
        <dbReference type="ChEBI" id="CHEBI:456215"/>
        <dbReference type="EC" id="6.1.1.15"/>
    </reaction>
</comment>
<comment type="subunit">
    <text evidence="1">Homodimer.</text>
</comment>
<comment type="subcellular location">
    <subcellularLocation>
        <location evidence="1">Cytoplasm</location>
    </subcellularLocation>
</comment>
<comment type="domain">
    <text evidence="1">Consists of three domains: the N-terminal catalytic domain, the anticodon-binding domain and the C-terminal extension.</text>
</comment>
<comment type="similarity">
    <text evidence="1">Belongs to the class-II aminoacyl-tRNA synthetase family. ProS type 3 subfamily.</text>
</comment>
<keyword id="KW-0030">Aminoacyl-tRNA synthetase</keyword>
<keyword id="KW-0067">ATP-binding</keyword>
<keyword id="KW-0963">Cytoplasm</keyword>
<keyword id="KW-0436">Ligase</keyword>
<keyword id="KW-0547">Nucleotide-binding</keyword>
<keyword id="KW-0648">Protein biosynthesis</keyword>
<keyword id="KW-1185">Reference proteome</keyword>
<feature type="chain" id="PRO_0000249137" description="Proline--tRNA ligase">
    <location>
        <begin position="1"/>
        <end position="476"/>
    </location>
</feature>
<organism>
    <name type="scientific">Mycoplasma mobile (strain ATCC 43663 / 163K / NCTC 11711)</name>
    <name type="common">Mesomycoplasma mobile</name>
    <dbReference type="NCBI Taxonomy" id="267748"/>
    <lineage>
        <taxon>Bacteria</taxon>
        <taxon>Bacillati</taxon>
        <taxon>Mycoplasmatota</taxon>
        <taxon>Mycoplasmoidales</taxon>
        <taxon>Metamycoplasmataceae</taxon>
        <taxon>Mesomycoplasma</taxon>
    </lineage>
</organism>
<name>SYP_MYCM1</name>
<reference key="1">
    <citation type="journal article" date="2004" name="Genome Res.">
        <title>The complete genome and proteome of Mycoplasma mobile.</title>
        <authorList>
            <person name="Jaffe J.D."/>
            <person name="Stange-Thomann N."/>
            <person name="Smith C."/>
            <person name="DeCaprio D."/>
            <person name="Fisher S."/>
            <person name="Butler J."/>
            <person name="Calvo S."/>
            <person name="Elkins T."/>
            <person name="FitzGerald M.G."/>
            <person name="Hafez N."/>
            <person name="Kodira C.D."/>
            <person name="Major J."/>
            <person name="Wang S."/>
            <person name="Wilkinson J."/>
            <person name="Nicol R."/>
            <person name="Nusbaum C."/>
            <person name="Birren B."/>
            <person name="Berg H.C."/>
            <person name="Church G.M."/>
        </authorList>
    </citation>
    <scope>NUCLEOTIDE SEQUENCE [LARGE SCALE GENOMIC DNA]</scope>
    <source>
        <strain>ATCC 43663 / NCTC 11711 / 163 K</strain>
    </source>
</reference>